<keyword id="KW-0413">Isomerase</keyword>
<keyword id="KW-0479">Metal-binding</keyword>
<keyword id="KW-0520">NAD</keyword>
<keyword id="KW-0521">NADP</keyword>
<keyword id="KW-0547">Nucleotide-binding</keyword>
<keyword id="KW-0630">Potassium</keyword>
<dbReference type="EC" id="5.1.99.6" evidence="1"/>
<dbReference type="EMBL" id="BX640428">
    <property type="protein sequence ID" value="CAE36972.1"/>
    <property type="molecule type" value="Genomic_DNA"/>
</dbReference>
<dbReference type="RefSeq" id="WP_010928142.1">
    <property type="nucleotide sequence ID" value="NC_002928.3"/>
</dbReference>
<dbReference type="SMR" id="Q7W9T3"/>
<dbReference type="GeneID" id="93203430"/>
<dbReference type="KEGG" id="bpa:BPP1671"/>
<dbReference type="HOGENOM" id="CLU_024853_0_2_4"/>
<dbReference type="Proteomes" id="UP000001421">
    <property type="component" value="Chromosome"/>
</dbReference>
<dbReference type="GO" id="GO:0046872">
    <property type="term" value="F:metal ion binding"/>
    <property type="evidence" value="ECO:0007669"/>
    <property type="project" value="UniProtKB-KW"/>
</dbReference>
<dbReference type="GO" id="GO:0052856">
    <property type="term" value="F:NAD(P)HX epimerase activity"/>
    <property type="evidence" value="ECO:0007669"/>
    <property type="project" value="UniProtKB-UniRule"/>
</dbReference>
<dbReference type="GO" id="GO:0000166">
    <property type="term" value="F:nucleotide binding"/>
    <property type="evidence" value="ECO:0007669"/>
    <property type="project" value="UniProtKB-KW"/>
</dbReference>
<dbReference type="Gene3D" id="3.40.50.10260">
    <property type="entry name" value="YjeF N-terminal domain"/>
    <property type="match status" value="1"/>
</dbReference>
<dbReference type="HAMAP" id="MF_01966">
    <property type="entry name" value="NADHX_epimerase"/>
    <property type="match status" value="1"/>
</dbReference>
<dbReference type="InterPro" id="IPR004443">
    <property type="entry name" value="YjeF_N_dom"/>
</dbReference>
<dbReference type="InterPro" id="IPR036652">
    <property type="entry name" value="YjeF_N_dom_sf"/>
</dbReference>
<dbReference type="Pfam" id="PF03853">
    <property type="entry name" value="YjeF_N"/>
    <property type="match status" value="1"/>
</dbReference>
<dbReference type="SUPFAM" id="SSF64153">
    <property type="entry name" value="YjeF N-terminal domain-like"/>
    <property type="match status" value="1"/>
</dbReference>
<dbReference type="PROSITE" id="PS51385">
    <property type="entry name" value="YJEF_N"/>
    <property type="match status" value="1"/>
</dbReference>
<feature type="chain" id="PRO_0000416345" description="NAD(P)H-hydrate epimerase">
    <location>
        <begin position="1"/>
        <end position="228"/>
    </location>
</feature>
<feature type="domain" description="YjeF N-terminal" evidence="1">
    <location>
        <begin position="9"/>
        <end position="209"/>
    </location>
</feature>
<feature type="binding site" evidence="1">
    <location>
        <begin position="53"/>
        <end position="57"/>
    </location>
    <ligand>
        <name>(6S)-NADPHX</name>
        <dbReference type="ChEBI" id="CHEBI:64076"/>
    </ligand>
</feature>
<feature type="binding site" evidence="1">
    <location>
        <position position="54"/>
    </location>
    <ligand>
        <name>K(+)</name>
        <dbReference type="ChEBI" id="CHEBI:29103"/>
    </ligand>
</feature>
<feature type="binding site" evidence="1">
    <location>
        <position position="115"/>
    </location>
    <ligand>
        <name>K(+)</name>
        <dbReference type="ChEBI" id="CHEBI:29103"/>
    </ligand>
</feature>
<feature type="binding site" evidence="1">
    <location>
        <begin position="119"/>
        <end position="125"/>
    </location>
    <ligand>
        <name>(6S)-NADPHX</name>
        <dbReference type="ChEBI" id="CHEBI:64076"/>
    </ligand>
</feature>
<feature type="binding site" evidence="1">
    <location>
        <position position="148"/>
    </location>
    <ligand>
        <name>(6S)-NADPHX</name>
        <dbReference type="ChEBI" id="CHEBI:64076"/>
    </ligand>
</feature>
<feature type="binding site" evidence="1">
    <location>
        <position position="151"/>
    </location>
    <ligand>
        <name>K(+)</name>
        <dbReference type="ChEBI" id="CHEBI:29103"/>
    </ligand>
</feature>
<gene>
    <name evidence="1" type="primary">nnrE</name>
    <name type="ordered locus">BPP1671</name>
</gene>
<proteinExistence type="inferred from homology"/>
<reference key="1">
    <citation type="journal article" date="2003" name="Nat. Genet.">
        <title>Comparative analysis of the genome sequences of Bordetella pertussis, Bordetella parapertussis and Bordetella bronchiseptica.</title>
        <authorList>
            <person name="Parkhill J."/>
            <person name="Sebaihia M."/>
            <person name="Preston A."/>
            <person name="Murphy L.D."/>
            <person name="Thomson N.R."/>
            <person name="Harris D.E."/>
            <person name="Holden M.T.G."/>
            <person name="Churcher C.M."/>
            <person name="Bentley S.D."/>
            <person name="Mungall K.L."/>
            <person name="Cerdeno-Tarraga A.-M."/>
            <person name="Temple L."/>
            <person name="James K.D."/>
            <person name="Harris B."/>
            <person name="Quail M.A."/>
            <person name="Achtman M."/>
            <person name="Atkin R."/>
            <person name="Baker S."/>
            <person name="Basham D."/>
            <person name="Bason N."/>
            <person name="Cherevach I."/>
            <person name="Chillingworth T."/>
            <person name="Collins M."/>
            <person name="Cronin A."/>
            <person name="Davis P."/>
            <person name="Doggett J."/>
            <person name="Feltwell T."/>
            <person name="Goble A."/>
            <person name="Hamlin N."/>
            <person name="Hauser H."/>
            <person name="Holroyd S."/>
            <person name="Jagels K."/>
            <person name="Leather S."/>
            <person name="Moule S."/>
            <person name="Norberczak H."/>
            <person name="O'Neil S."/>
            <person name="Ormond D."/>
            <person name="Price C."/>
            <person name="Rabbinowitsch E."/>
            <person name="Rutter S."/>
            <person name="Sanders M."/>
            <person name="Saunders D."/>
            <person name="Seeger K."/>
            <person name="Sharp S."/>
            <person name="Simmonds M."/>
            <person name="Skelton J."/>
            <person name="Squares R."/>
            <person name="Squares S."/>
            <person name="Stevens K."/>
            <person name="Unwin L."/>
            <person name="Whitehead S."/>
            <person name="Barrell B.G."/>
            <person name="Maskell D.J."/>
        </authorList>
    </citation>
    <scope>NUCLEOTIDE SEQUENCE [LARGE SCALE GENOMIC DNA]</scope>
    <source>
        <strain>12822 / ATCC BAA-587 / NCTC 13253</strain>
    </source>
</reference>
<evidence type="ECO:0000255" key="1">
    <source>
        <dbReference type="HAMAP-Rule" id="MF_01966"/>
    </source>
</evidence>
<name>NNRE_BORPA</name>
<protein>
    <recommendedName>
        <fullName evidence="1">NAD(P)H-hydrate epimerase</fullName>
        <ecNumber evidence="1">5.1.99.6</ecNumber>
    </recommendedName>
    <alternativeName>
        <fullName evidence="1">NAD(P)HX epimerase</fullName>
    </alternativeName>
</protein>
<sequence>MDIERVEQVRAVERLAHRRGLALMPRAGLAAADFVAARLPAGAQVLALAGPGNNGGDVLVAATLLQARGYRVAVVMPAGPARLPDDARRAWQDWCAAGGQASADLPAHAPALVIDGLFGIGLARPLGGAWQGLIDQVNAWRVPVLALDVPSGLSAASGQPLGDPPGRPVRATWTLSFIGVPAALRAPGAAAWCGEQYLSLLGLTPAFLAEAVGPCGQATATAARRSGP</sequence>
<comment type="function">
    <text evidence="1">Catalyzes the epimerization of the S- and R-forms of NAD(P)HX, a damaged form of NAD(P)H that is a result of enzymatic or heat-dependent hydration. This is a prerequisite for the S-specific NAD(P)H-hydrate dehydratase to allow the repair of both epimers of NAD(P)HX.</text>
</comment>
<comment type="catalytic activity">
    <reaction evidence="1">
        <text>(6R)-NADHX = (6S)-NADHX</text>
        <dbReference type="Rhea" id="RHEA:32215"/>
        <dbReference type="ChEBI" id="CHEBI:64074"/>
        <dbReference type="ChEBI" id="CHEBI:64075"/>
        <dbReference type="EC" id="5.1.99.6"/>
    </reaction>
</comment>
<comment type="catalytic activity">
    <reaction evidence="1">
        <text>(6R)-NADPHX = (6S)-NADPHX</text>
        <dbReference type="Rhea" id="RHEA:32227"/>
        <dbReference type="ChEBI" id="CHEBI:64076"/>
        <dbReference type="ChEBI" id="CHEBI:64077"/>
        <dbReference type="EC" id="5.1.99.6"/>
    </reaction>
</comment>
<comment type="cofactor">
    <cofactor evidence="1">
        <name>K(+)</name>
        <dbReference type="ChEBI" id="CHEBI:29103"/>
    </cofactor>
    <text evidence="1">Binds 1 potassium ion per subunit.</text>
</comment>
<comment type="similarity">
    <text evidence="1">Belongs to the NnrE/AIBP family.</text>
</comment>
<accession>Q7W9T3</accession>
<organism>
    <name type="scientific">Bordetella parapertussis (strain 12822 / ATCC BAA-587 / NCTC 13253)</name>
    <dbReference type="NCBI Taxonomy" id="257311"/>
    <lineage>
        <taxon>Bacteria</taxon>
        <taxon>Pseudomonadati</taxon>
        <taxon>Pseudomonadota</taxon>
        <taxon>Betaproteobacteria</taxon>
        <taxon>Burkholderiales</taxon>
        <taxon>Alcaligenaceae</taxon>
        <taxon>Bordetella</taxon>
    </lineage>
</organism>